<gene>
    <name evidence="1" type="primary">sepF</name>
    <name type="ordered locus">PTH_1827</name>
</gene>
<protein>
    <recommendedName>
        <fullName evidence="1">Cell division protein SepF</fullName>
    </recommendedName>
</protein>
<reference key="1">
    <citation type="journal article" date="2008" name="Genome Res.">
        <title>The genome of Pelotomaculum thermopropionicum reveals niche-associated evolution in anaerobic microbiota.</title>
        <authorList>
            <person name="Kosaka T."/>
            <person name="Kato S."/>
            <person name="Shimoyama T."/>
            <person name="Ishii S."/>
            <person name="Abe T."/>
            <person name="Watanabe K."/>
        </authorList>
    </citation>
    <scope>NUCLEOTIDE SEQUENCE [LARGE SCALE GENOMIC DNA]</scope>
    <source>
        <strain>DSM 13744 / JCM 10971 / SI</strain>
    </source>
</reference>
<evidence type="ECO:0000255" key="1">
    <source>
        <dbReference type="HAMAP-Rule" id="MF_01197"/>
    </source>
</evidence>
<evidence type="ECO:0000305" key="2"/>
<sequence length="149" mass="17044">MAFKLVDKVLSFMGFEEEVVEEEEKRARDEIVEEQPWQRKKEKDRGAVLSLHAQRQVRVVVVEPRAFDEVQGIADNLKNRRPVIVNLEQAEPDLAKRIVDFISGATYALNGSLQKVGSGIFLFVPNNMDIASDLKDPQKEKGIFTWMRS</sequence>
<keyword id="KW-0131">Cell cycle</keyword>
<keyword id="KW-0132">Cell division</keyword>
<keyword id="KW-0963">Cytoplasm</keyword>
<keyword id="KW-1185">Reference proteome</keyword>
<keyword id="KW-0717">Septation</keyword>
<comment type="function">
    <text evidence="1">Cell division protein that is part of the divisome complex and is recruited early to the Z-ring. Probably stimulates Z-ring formation, perhaps through the cross-linking of FtsZ protofilaments. Its function overlaps with FtsA.</text>
</comment>
<comment type="subunit">
    <text evidence="1">Homodimer. Interacts with FtsZ.</text>
</comment>
<comment type="subcellular location">
    <subcellularLocation>
        <location evidence="1">Cytoplasm</location>
    </subcellularLocation>
    <text evidence="1">Localizes to the division site, in a FtsZ-dependent manner.</text>
</comment>
<comment type="similarity">
    <text evidence="1">Belongs to the SepF family.</text>
</comment>
<comment type="sequence caution" evidence="2">
    <conflict type="erroneous initiation">
        <sequence resource="EMBL-CDS" id="BAF60008"/>
    </conflict>
</comment>
<organism>
    <name type="scientific">Pelotomaculum thermopropionicum (strain DSM 13744 / JCM 10971 / SI)</name>
    <dbReference type="NCBI Taxonomy" id="370438"/>
    <lineage>
        <taxon>Bacteria</taxon>
        <taxon>Bacillati</taxon>
        <taxon>Bacillota</taxon>
        <taxon>Clostridia</taxon>
        <taxon>Eubacteriales</taxon>
        <taxon>Desulfotomaculaceae</taxon>
        <taxon>Pelotomaculum</taxon>
    </lineage>
</organism>
<accession>A5D186</accession>
<name>SEPF_PELTS</name>
<proteinExistence type="inferred from homology"/>
<feature type="chain" id="PRO_0000334055" description="Cell division protein SepF">
    <location>
        <begin position="1"/>
        <end position="149"/>
    </location>
</feature>
<dbReference type="EMBL" id="AP009389">
    <property type="protein sequence ID" value="BAF60008.1"/>
    <property type="status" value="ALT_INIT"/>
    <property type="molecule type" value="Genomic_DNA"/>
</dbReference>
<dbReference type="SMR" id="A5D186"/>
<dbReference type="STRING" id="370438.PTH_1827"/>
<dbReference type="KEGG" id="pth:PTH_1827"/>
<dbReference type="eggNOG" id="COG1799">
    <property type="taxonomic scope" value="Bacteria"/>
</dbReference>
<dbReference type="HOGENOM" id="CLU_078499_4_0_9"/>
<dbReference type="Proteomes" id="UP000006556">
    <property type="component" value="Chromosome"/>
</dbReference>
<dbReference type="GO" id="GO:0005737">
    <property type="term" value="C:cytoplasm"/>
    <property type="evidence" value="ECO:0007669"/>
    <property type="project" value="UniProtKB-SubCell"/>
</dbReference>
<dbReference type="GO" id="GO:0000917">
    <property type="term" value="P:division septum assembly"/>
    <property type="evidence" value="ECO:0007669"/>
    <property type="project" value="UniProtKB-KW"/>
</dbReference>
<dbReference type="GO" id="GO:0043093">
    <property type="term" value="P:FtsZ-dependent cytokinesis"/>
    <property type="evidence" value="ECO:0007669"/>
    <property type="project" value="UniProtKB-UniRule"/>
</dbReference>
<dbReference type="Gene3D" id="3.30.110.150">
    <property type="entry name" value="SepF-like protein"/>
    <property type="match status" value="1"/>
</dbReference>
<dbReference type="HAMAP" id="MF_01197">
    <property type="entry name" value="SepF"/>
    <property type="match status" value="1"/>
</dbReference>
<dbReference type="InterPro" id="IPR023052">
    <property type="entry name" value="Cell_div_SepF"/>
</dbReference>
<dbReference type="InterPro" id="IPR007561">
    <property type="entry name" value="Cell_div_SepF/SepF-rel"/>
</dbReference>
<dbReference type="InterPro" id="IPR038594">
    <property type="entry name" value="SepF-like_sf"/>
</dbReference>
<dbReference type="PANTHER" id="PTHR35798">
    <property type="entry name" value="CELL DIVISION PROTEIN SEPF"/>
    <property type="match status" value="1"/>
</dbReference>
<dbReference type="PANTHER" id="PTHR35798:SF1">
    <property type="entry name" value="CELL DIVISION PROTEIN SEPF"/>
    <property type="match status" value="1"/>
</dbReference>
<dbReference type="Pfam" id="PF04472">
    <property type="entry name" value="SepF"/>
    <property type="match status" value="1"/>
</dbReference>